<feature type="chain" id="PRO_0000151999" description="Leucine--tRNA ligase">
    <location>
        <begin position="1"/>
        <end position="807"/>
    </location>
</feature>
<feature type="short sequence motif" description="'HIGH' region">
    <location>
        <begin position="40"/>
        <end position="51"/>
    </location>
</feature>
<feature type="short sequence motif" description="'KMSKS' region">
    <location>
        <begin position="576"/>
        <end position="580"/>
    </location>
</feature>
<feature type="binding site" evidence="1">
    <location>
        <position position="579"/>
    </location>
    <ligand>
        <name>ATP</name>
        <dbReference type="ChEBI" id="CHEBI:30616"/>
    </ligand>
</feature>
<name>SYL_CHLTE</name>
<evidence type="ECO:0000255" key="1">
    <source>
        <dbReference type="HAMAP-Rule" id="MF_00049"/>
    </source>
</evidence>
<accession>Q8KBY2</accession>
<organism>
    <name type="scientific">Chlorobaculum tepidum (strain ATCC 49652 / DSM 12025 / NBRC 103806 / TLS)</name>
    <name type="common">Chlorobium tepidum</name>
    <dbReference type="NCBI Taxonomy" id="194439"/>
    <lineage>
        <taxon>Bacteria</taxon>
        <taxon>Pseudomonadati</taxon>
        <taxon>Chlorobiota</taxon>
        <taxon>Chlorobiia</taxon>
        <taxon>Chlorobiales</taxon>
        <taxon>Chlorobiaceae</taxon>
        <taxon>Chlorobaculum</taxon>
    </lineage>
</organism>
<gene>
    <name evidence="1" type="primary">leuS</name>
    <name type="ordered locus">CT1650</name>
</gene>
<reference key="1">
    <citation type="journal article" date="2002" name="Proc. Natl. Acad. Sci. U.S.A.">
        <title>The complete genome sequence of Chlorobium tepidum TLS, a photosynthetic, anaerobic, green-sulfur bacterium.</title>
        <authorList>
            <person name="Eisen J.A."/>
            <person name="Nelson K.E."/>
            <person name="Paulsen I.T."/>
            <person name="Heidelberg J.F."/>
            <person name="Wu M."/>
            <person name="Dodson R.J."/>
            <person name="DeBoy R.T."/>
            <person name="Gwinn M.L."/>
            <person name="Nelson W.C."/>
            <person name="Haft D.H."/>
            <person name="Hickey E.K."/>
            <person name="Peterson J.D."/>
            <person name="Durkin A.S."/>
            <person name="Kolonay J.F."/>
            <person name="Yang F."/>
            <person name="Holt I.E."/>
            <person name="Umayam L.A."/>
            <person name="Mason T.M."/>
            <person name="Brenner M."/>
            <person name="Shea T.P."/>
            <person name="Parksey D.S."/>
            <person name="Nierman W.C."/>
            <person name="Feldblyum T.V."/>
            <person name="Hansen C.L."/>
            <person name="Craven M.B."/>
            <person name="Radune D."/>
            <person name="Vamathevan J.J."/>
            <person name="Khouri H.M."/>
            <person name="White O."/>
            <person name="Gruber T.M."/>
            <person name="Ketchum K.A."/>
            <person name="Venter J.C."/>
            <person name="Tettelin H."/>
            <person name="Bryant D.A."/>
            <person name="Fraser C.M."/>
        </authorList>
    </citation>
    <scope>NUCLEOTIDE SEQUENCE [LARGE SCALE GENOMIC DNA]</scope>
    <source>
        <strain>ATCC 49652 / DSM 12025 / NBRC 103806 / TLS</strain>
    </source>
</reference>
<keyword id="KW-0030">Aminoacyl-tRNA synthetase</keyword>
<keyword id="KW-0067">ATP-binding</keyword>
<keyword id="KW-0963">Cytoplasm</keyword>
<keyword id="KW-0436">Ligase</keyword>
<keyword id="KW-0547">Nucleotide-binding</keyword>
<keyword id="KW-0648">Protein biosynthesis</keyword>
<keyword id="KW-1185">Reference proteome</keyword>
<sequence>MKYDFSALEKKWQSRWADEQTFASSADQEKPKYYVLDMFPYPSGSGLHVGHLEGYTATDIMARYKRCQGHNVLHPMGWDAFGLPAEQFAIKTGTHPRLTTEKNVASFRETLKSMGFSYDWSREINTTDPNYFKWTQWIFLKLYEKGLAYISEVDVNWCEELKVVLANEEVDEKIADGYTVVRRPLRQWVLKITAYAERLLKDLDEVDWPENVKQMQRNWIGRSEGMEIDFELRCHRTNLRVYTTRPDTLFGATYLVISPEHPMAEKLAIAQQLVAVKKYIEQAKLKTELERTGLQKEKTGVFTGSYAINPANGEALPVWISDFVLTSYGTGAIMSVPAHDSRDWEFAKKFGLPIREVIKSPHDVQERVFDGKESVCVNSANDEISINGLDFKTAFDRMAAWLESKGKGKRKVNYKLRDWVFSRQRYWGEPIPIKHYEDGTMRPETNLPLTLPEVEAYQPTSTGESPLANIESWLYGEDEHGKFRRETNTMPQWAGSCWYYLRFIDPQNSDALVDPSLEQYWMNVDLYIGGAEHAVLHLLYSRFWHKVLYDLGVVSTKEPFQRLFNQGMILGEDNEKMSKSRGNVIPADHVLSTYGADALRLYEMFLGPLDQVKPWNTHGIEGISRFLNKVWRLVWDENTETQKTTEDKPSEAILKRMHKAIKKVTEDTEQLKFNTAISEMMVLVNELHKAGCYSRETTETLLVLLSPFAPHITEELWQALGHAESISGAVWPVFDAKLATDDVLTIAVQVNGKLRGTFEAPAGCTKEEMIESAKKVESVAKFLDGQQIVKEIAVPGKLVNFAVKPQQ</sequence>
<comment type="catalytic activity">
    <reaction evidence="1">
        <text>tRNA(Leu) + L-leucine + ATP = L-leucyl-tRNA(Leu) + AMP + diphosphate</text>
        <dbReference type="Rhea" id="RHEA:11688"/>
        <dbReference type="Rhea" id="RHEA-COMP:9613"/>
        <dbReference type="Rhea" id="RHEA-COMP:9622"/>
        <dbReference type="ChEBI" id="CHEBI:30616"/>
        <dbReference type="ChEBI" id="CHEBI:33019"/>
        <dbReference type="ChEBI" id="CHEBI:57427"/>
        <dbReference type="ChEBI" id="CHEBI:78442"/>
        <dbReference type="ChEBI" id="CHEBI:78494"/>
        <dbReference type="ChEBI" id="CHEBI:456215"/>
        <dbReference type="EC" id="6.1.1.4"/>
    </reaction>
</comment>
<comment type="subcellular location">
    <subcellularLocation>
        <location evidence="1">Cytoplasm</location>
    </subcellularLocation>
</comment>
<comment type="similarity">
    <text evidence="1">Belongs to the class-I aminoacyl-tRNA synthetase family.</text>
</comment>
<dbReference type="EC" id="6.1.1.4" evidence="1"/>
<dbReference type="EMBL" id="AE006470">
    <property type="protein sequence ID" value="AAM72875.1"/>
    <property type="molecule type" value="Genomic_DNA"/>
</dbReference>
<dbReference type="RefSeq" id="NP_662533.1">
    <property type="nucleotide sequence ID" value="NC_002932.3"/>
</dbReference>
<dbReference type="RefSeq" id="WP_010933314.1">
    <property type="nucleotide sequence ID" value="NC_002932.3"/>
</dbReference>
<dbReference type="SMR" id="Q8KBY2"/>
<dbReference type="STRING" id="194439.CT1650"/>
<dbReference type="EnsemblBacteria" id="AAM72875">
    <property type="protein sequence ID" value="AAM72875"/>
    <property type="gene ID" value="CT1650"/>
</dbReference>
<dbReference type="KEGG" id="cte:CT1650"/>
<dbReference type="PATRIC" id="fig|194439.7.peg.1492"/>
<dbReference type="eggNOG" id="COG0495">
    <property type="taxonomic scope" value="Bacteria"/>
</dbReference>
<dbReference type="HOGENOM" id="CLU_004427_0_0_10"/>
<dbReference type="OrthoDB" id="9810365at2"/>
<dbReference type="Proteomes" id="UP000001007">
    <property type="component" value="Chromosome"/>
</dbReference>
<dbReference type="GO" id="GO:0005829">
    <property type="term" value="C:cytosol"/>
    <property type="evidence" value="ECO:0007669"/>
    <property type="project" value="TreeGrafter"/>
</dbReference>
<dbReference type="GO" id="GO:0002161">
    <property type="term" value="F:aminoacyl-tRNA deacylase activity"/>
    <property type="evidence" value="ECO:0007669"/>
    <property type="project" value="InterPro"/>
</dbReference>
<dbReference type="GO" id="GO:0005524">
    <property type="term" value="F:ATP binding"/>
    <property type="evidence" value="ECO:0007669"/>
    <property type="project" value="UniProtKB-UniRule"/>
</dbReference>
<dbReference type="GO" id="GO:0004823">
    <property type="term" value="F:leucine-tRNA ligase activity"/>
    <property type="evidence" value="ECO:0007669"/>
    <property type="project" value="UniProtKB-UniRule"/>
</dbReference>
<dbReference type="GO" id="GO:0006429">
    <property type="term" value="P:leucyl-tRNA aminoacylation"/>
    <property type="evidence" value="ECO:0007669"/>
    <property type="project" value="UniProtKB-UniRule"/>
</dbReference>
<dbReference type="CDD" id="cd07958">
    <property type="entry name" value="Anticodon_Ia_Leu_BEm"/>
    <property type="match status" value="1"/>
</dbReference>
<dbReference type="CDD" id="cd00812">
    <property type="entry name" value="LeuRS_core"/>
    <property type="match status" value="1"/>
</dbReference>
<dbReference type="FunFam" id="3.40.50.620:FF:000056">
    <property type="entry name" value="Leucine--tRNA ligase"/>
    <property type="match status" value="1"/>
</dbReference>
<dbReference type="FunFam" id="3.40.50.620:FF:000077">
    <property type="entry name" value="Leucine--tRNA ligase"/>
    <property type="match status" value="1"/>
</dbReference>
<dbReference type="FunFam" id="1.10.730.10:FF:000011">
    <property type="entry name" value="Leucine--tRNA ligase chloroplastic/mitochondrial"/>
    <property type="match status" value="1"/>
</dbReference>
<dbReference type="Gene3D" id="3.10.20.590">
    <property type="match status" value="1"/>
</dbReference>
<dbReference type="Gene3D" id="3.40.50.620">
    <property type="entry name" value="HUPs"/>
    <property type="match status" value="2"/>
</dbReference>
<dbReference type="Gene3D" id="1.10.730.10">
    <property type="entry name" value="Isoleucyl-tRNA Synthetase, Domain 1"/>
    <property type="match status" value="1"/>
</dbReference>
<dbReference type="HAMAP" id="MF_00049_B">
    <property type="entry name" value="Leu_tRNA_synth_B"/>
    <property type="match status" value="1"/>
</dbReference>
<dbReference type="InterPro" id="IPR002300">
    <property type="entry name" value="aa-tRNA-synth_Ia"/>
</dbReference>
<dbReference type="InterPro" id="IPR002302">
    <property type="entry name" value="Leu-tRNA-ligase"/>
</dbReference>
<dbReference type="InterPro" id="IPR025709">
    <property type="entry name" value="Leu_tRNA-synth_edit"/>
</dbReference>
<dbReference type="InterPro" id="IPR013155">
    <property type="entry name" value="M/V/L/I-tRNA-synth_anticd-bd"/>
</dbReference>
<dbReference type="InterPro" id="IPR015413">
    <property type="entry name" value="Methionyl/Leucyl_tRNA_Synth"/>
</dbReference>
<dbReference type="InterPro" id="IPR014729">
    <property type="entry name" value="Rossmann-like_a/b/a_fold"/>
</dbReference>
<dbReference type="InterPro" id="IPR009080">
    <property type="entry name" value="tRNAsynth_Ia_anticodon-bd"/>
</dbReference>
<dbReference type="InterPro" id="IPR009008">
    <property type="entry name" value="Val/Leu/Ile-tRNA-synth_edit"/>
</dbReference>
<dbReference type="NCBIfam" id="TIGR00396">
    <property type="entry name" value="leuS_bact"/>
    <property type="match status" value="1"/>
</dbReference>
<dbReference type="PANTHER" id="PTHR43740:SF2">
    <property type="entry name" value="LEUCINE--TRNA LIGASE, MITOCHONDRIAL"/>
    <property type="match status" value="1"/>
</dbReference>
<dbReference type="PANTHER" id="PTHR43740">
    <property type="entry name" value="LEUCYL-TRNA SYNTHETASE"/>
    <property type="match status" value="1"/>
</dbReference>
<dbReference type="Pfam" id="PF08264">
    <property type="entry name" value="Anticodon_1"/>
    <property type="match status" value="1"/>
</dbReference>
<dbReference type="Pfam" id="PF00133">
    <property type="entry name" value="tRNA-synt_1"/>
    <property type="match status" value="1"/>
</dbReference>
<dbReference type="Pfam" id="PF13603">
    <property type="entry name" value="tRNA-synt_1_2"/>
    <property type="match status" value="1"/>
</dbReference>
<dbReference type="Pfam" id="PF09334">
    <property type="entry name" value="tRNA-synt_1g"/>
    <property type="match status" value="1"/>
</dbReference>
<dbReference type="PRINTS" id="PR00985">
    <property type="entry name" value="TRNASYNTHLEU"/>
</dbReference>
<dbReference type="SUPFAM" id="SSF47323">
    <property type="entry name" value="Anticodon-binding domain of a subclass of class I aminoacyl-tRNA synthetases"/>
    <property type="match status" value="1"/>
</dbReference>
<dbReference type="SUPFAM" id="SSF52374">
    <property type="entry name" value="Nucleotidylyl transferase"/>
    <property type="match status" value="1"/>
</dbReference>
<dbReference type="SUPFAM" id="SSF50677">
    <property type="entry name" value="ValRS/IleRS/LeuRS editing domain"/>
    <property type="match status" value="1"/>
</dbReference>
<proteinExistence type="inferred from homology"/>
<protein>
    <recommendedName>
        <fullName evidence="1">Leucine--tRNA ligase</fullName>
        <ecNumber evidence="1">6.1.1.4</ecNumber>
    </recommendedName>
    <alternativeName>
        <fullName evidence="1">Leucyl-tRNA synthetase</fullName>
        <shortName evidence="1">LeuRS</shortName>
    </alternativeName>
</protein>